<gene>
    <name evidence="1" type="primary">gltX1</name>
    <name type="ordered locus">Tpet_0922</name>
</gene>
<proteinExistence type="inferred from homology"/>
<accession>A5IL67</accession>
<organism>
    <name type="scientific">Thermotoga petrophila (strain ATCC BAA-488 / DSM 13995 / JCM 10881 / RKU-1)</name>
    <dbReference type="NCBI Taxonomy" id="390874"/>
    <lineage>
        <taxon>Bacteria</taxon>
        <taxon>Thermotogati</taxon>
        <taxon>Thermotogota</taxon>
        <taxon>Thermotogae</taxon>
        <taxon>Thermotogales</taxon>
        <taxon>Thermotogaceae</taxon>
        <taxon>Thermotoga</taxon>
    </lineage>
</organism>
<sequence length="464" mass="54699">MVRVRFAPSPTGHLHVGGARTALFNWMFARKEGGKFILRIEDTDTERSSREYEQQILESLRWCGLDWDEGPDIGGDFGPYRQSERLEIYREYAEKLVEDKRAYYVVYDKEDPSKELFTTYEYPHEYKEKGHPVTIKFKVLPGKTSFEDLLKGYMEFDNSTLEDFIIMKSNGFPTYNFAVVVDDHLMRISHVFRGEDHLSNTPKQLMIYEAFGWEAPVFMHIPLILGSDRTPLSKRHGATSVEHFRREGILSRALMNYLALLGWRVEGDEIFTIEEKLQSFDPKDISNKGVIFDYQKLEWVNGKHMRRIDLEDLKREFIEWAKYAGKEIPSVDERYFSETLRICREKVNTLSQLYDIMYPFMNDDYEYEKDYVEKFLKREEAERVLEEAKKAFKDLNSWNMEEIEKTLRDLSEKGLASKKVVFQLIRGAVTGKLVTPGLFETIEVLGKERTLKRLERTLQFLKKT</sequence>
<protein>
    <recommendedName>
        <fullName evidence="1">Glutamate--tRNA ligase 1</fullName>
        <ecNumber evidence="1">6.1.1.17</ecNumber>
    </recommendedName>
    <alternativeName>
        <fullName evidence="1">Glutamyl-tRNA synthetase 1</fullName>
        <shortName evidence="1">GluRS 1</shortName>
    </alternativeName>
</protein>
<feature type="chain" id="PRO_0000367790" description="Glutamate--tRNA ligase 1">
    <location>
        <begin position="1"/>
        <end position="464"/>
    </location>
</feature>
<feature type="short sequence motif" description="'HIGH' region" evidence="1">
    <location>
        <begin position="8"/>
        <end position="18"/>
    </location>
</feature>
<feature type="short sequence motif" description="'KMSKS' region" evidence="1">
    <location>
        <begin position="231"/>
        <end position="235"/>
    </location>
</feature>
<feature type="binding site" evidence="1">
    <location>
        <position position="234"/>
    </location>
    <ligand>
        <name>ATP</name>
        <dbReference type="ChEBI" id="CHEBI:30616"/>
    </ligand>
</feature>
<comment type="function">
    <text evidence="1">Catalyzes the attachment of glutamate to tRNA(Glu) in a two-step reaction: glutamate is first activated by ATP to form Glu-AMP and then transferred to the acceptor end of tRNA(Glu).</text>
</comment>
<comment type="catalytic activity">
    <reaction evidence="1">
        <text>tRNA(Glu) + L-glutamate + ATP = L-glutamyl-tRNA(Glu) + AMP + diphosphate</text>
        <dbReference type="Rhea" id="RHEA:23540"/>
        <dbReference type="Rhea" id="RHEA-COMP:9663"/>
        <dbReference type="Rhea" id="RHEA-COMP:9680"/>
        <dbReference type="ChEBI" id="CHEBI:29985"/>
        <dbReference type="ChEBI" id="CHEBI:30616"/>
        <dbReference type="ChEBI" id="CHEBI:33019"/>
        <dbReference type="ChEBI" id="CHEBI:78442"/>
        <dbReference type="ChEBI" id="CHEBI:78520"/>
        <dbReference type="ChEBI" id="CHEBI:456215"/>
        <dbReference type="EC" id="6.1.1.17"/>
    </reaction>
</comment>
<comment type="subunit">
    <text evidence="1">Monomer.</text>
</comment>
<comment type="subcellular location">
    <subcellularLocation>
        <location evidence="1">Cytoplasm</location>
    </subcellularLocation>
</comment>
<comment type="similarity">
    <text evidence="1">Belongs to the class-I aminoacyl-tRNA synthetase family. Glutamate--tRNA ligase type 1 subfamily.</text>
</comment>
<evidence type="ECO:0000255" key="1">
    <source>
        <dbReference type="HAMAP-Rule" id="MF_00022"/>
    </source>
</evidence>
<keyword id="KW-0030">Aminoacyl-tRNA synthetase</keyword>
<keyword id="KW-0067">ATP-binding</keyword>
<keyword id="KW-0963">Cytoplasm</keyword>
<keyword id="KW-0436">Ligase</keyword>
<keyword id="KW-0547">Nucleotide-binding</keyword>
<keyword id="KW-0648">Protein biosynthesis</keyword>
<dbReference type="EC" id="6.1.1.17" evidence="1"/>
<dbReference type="EMBL" id="CP000702">
    <property type="protein sequence ID" value="ABQ46940.1"/>
    <property type="molecule type" value="Genomic_DNA"/>
</dbReference>
<dbReference type="SMR" id="A5IL67"/>
<dbReference type="STRING" id="390874.Tpet_0922"/>
<dbReference type="KEGG" id="tpt:Tpet_0922"/>
<dbReference type="eggNOG" id="COG0008">
    <property type="taxonomic scope" value="Bacteria"/>
</dbReference>
<dbReference type="HOGENOM" id="CLU_015768_6_3_0"/>
<dbReference type="Proteomes" id="UP000006558">
    <property type="component" value="Chromosome"/>
</dbReference>
<dbReference type="GO" id="GO:0005829">
    <property type="term" value="C:cytosol"/>
    <property type="evidence" value="ECO:0007669"/>
    <property type="project" value="TreeGrafter"/>
</dbReference>
<dbReference type="GO" id="GO:0005524">
    <property type="term" value="F:ATP binding"/>
    <property type="evidence" value="ECO:0007669"/>
    <property type="project" value="UniProtKB-UniRule"/>
</dbReference>
<dbReference type="GO" id="GO:0004818">
    <property type="term" value="F:glutamate-tRNA ligase activity"/>
    <property type="evidence" value="ECO:0007669"/>
    <property type="project" value="UniProtKB-UniRule"/>
</dbReference>
<dbReference type="GO" id="GO:0000049">
    <property type="term" value="F:tRNA binding"/>
    <property type="evidence" value="ECO:0007669"/>
    <property type="project" value="InterPro"/>
</dbReference>
<dbReference type="GO" id="GO:0008270">
    <property type="term" value="F:zinc ion binding"/>
    <property type="evidence" value="ECO:0007669"/>
    <property type="project" value="InterPro"/>
</dbReference>
<dbReference type="GO" id="GO:0006424">
    <property type="term" value="P:glutamyl-tRNA aminoacylation"/>
    <property type="evidence" value="ECO:0007669"/>
    <property type="project" value="UniProtKB-UniRule"/>
</dbReference>
<dbReference type="CDD" id="cd00808">
    <property type="entry name" value="GluRS_core"/>
    <property type="match status" value="1"/>
</dbReference>
<dbReference type="FunFam" id="1.10.1160.10:FF:000003">
    <property type="entry name" value="Glutamate--tRNA ligase 2"/>
    <property type="match status" value="1"/>
</dbReference>
<dbReference type="Gene3D" id="1.10.10.350">
    <property type="match status" value="1"/>
</dbReference>
<dbReference type="Gene3D" id="1.10.8.70">
    <property type="entry name" value="Glutamate-tRNA synthetase, class I, anticodon-binding domain 1"/>
    <property type="match status" value="1"/>
</dbReference>
<dbReference type="Gene3D" id="1.10.1160.10">
    <property type="entry name" value="Glutamyl-trna Synthetase, Domain 2"/>
    <property type="match status" value="1"/>
</dbReference>
<dbReference type="Gene3D" id="3.90.800.10">
    <property type="entry name" value="Glutamyl-tRNA Synthetase, Domain 3"/>
    <property type="match status" value="1"/>
</dbReference>
<dbReference type="Gene3D" id="3.40.50.620">
    <property type="entry name" value="HUPs"/>
    <property type="match status" value="1"/>
</dbReference>
<dbReference type="HAMAP" id="MF_00022">
    <property type="entry name" value="Glu_tRNA_synth_type1"/>
    <property type="match status" value="1"/>
</dbReference>
<dbReference type="InterPro" id="IPR045462">
    <property type="entry name" value="aa-tRNA-synth_I_cd-bd"/>
</dbReference>
<dbReference type="InterPro" id="IPR020751">
    <property type="entry name" value="aa-tRNA-synth_I_codon-bd_sub2"/>
</dbReference>
<dbReference type="InterPro" id="IPR001412">
    <property type="entry name" value="aa-tRNA-synth_I_CS"/>
</dbReference>
<dbReference type="InterPro" id="IPR008925">
    <property type="entry name" value="aa_tRNA-synth_I_cd-bd_sf"/>
</dbReference>
<dbReference type="InterPro" id="IPR004527">
    <property type="entry name" value="Glu-tRNA-ligase_bac/mito"/>
</dbReference>
<dbReference type="InterPro" id="IPR020752">
    <property type="entry name" value="Glu-tRNA-synth_I_codon-bd_sub1"/>
</dbReference>
<dbReference type="InterPro" id="IPR000924">
    <property type="entry name" value="Glu/Gln-tRNA-synth"/>
</dbReference>
<dbReference type="InterPro" id="IPR020058">
    <property type="entry name" value="Glu/Gln-tRNA-synth_Ib_cat-dom"/>
</dbReference>
<dbReference type="InterPro" id="IPR020061">
    <property type="entry name" value="Glu_tRNA_lig_a-bdl"/>
</dbReference>
<dbReference type="InterPro" id="IPR049940">
    <property type="entry name" value="GluQ/Sye"/>
</dbReference>
<dbReference type="InterPro" id="IPR033910">
    <property type="entry name" value="GluRS_core"/>
</dbReference>
<dbReference type="InterPro" id="IPR014729">
    <property type="entry name" value="Rossmann-like_a/b/a_fold"/>
</dbReference>
<dbReference type="NCBIfam" id="TIGR00464">
    <property type="entry name" value="gltX_bact"/>
    <property type="match status" value="1"/>
</dbReference>
<dbReference type="PANTHER" id="PTHR43311">
    <property type="entry name" value="GLUTAMATE--TRNA LIGASE"/>
    <property type="match status" value="1"/>
</dbReference>
<dbReference type="PANTHER" id="PTHR43311:SF2">
    <property type="entry name" value="GLUTAMATE--TRNA LIGASE, MITOCHONDRIAL-RELATED"/>
    <property type="match status" value="1"/>
</dbReference>
<dbReference type="Pfam" id="PF19269">
    <property type="entry name" value="Anticodon_2"/>
    <property type="match status" value="1"/>
</dbReference>
<dbReference type="Pfam" id="PF00749">
    <property type="entry name" value="tRNA-synt_1c"/>
    <property type="match status" value="2"/>
</dbReference>
<dbReference type="PRINTS" id="PR00987">
    <property type="entry name" value="TRNASYNTHGLU"/>
</dbReference>
<dbReference type="SUPFAM" id="SSF48163">
    <property type="entry name" value="An anticodon-binding domain of class I aminoacyl-tRNA synthetases"/>
    <property type="match status" value="1"/>
</dbReference>
<dbReference type="SUPFAM" id="SSF52374">
    <property type="entry name" value="Nucleotidylyl transferase"/>
    <property type="match status" value="1"/>
</dbReference>
<dbReference type="PROSITE" id="PS00178">
    <property type="entry name" value="AA_TRNA_LIGASE_I"/>
    <property type="match status" value="1"/>
</dbReference>
<reference key="1">
    <citation type="submission" date="2007-05" db="EMBL/GenBank/DDBJ databases">
        <title>Complete sequence of Thermotoga petrophila RKU-1.</title>
        <authorList>
            <consortium name="US DOE Joint Genome Institute"/>
            <person name="Copeland A."/>
            <person name="Lucas S."/>
            <person name="Lapidus A."/>
            <person name="Barry K."/>
            <person name="Glavina del Rio T."/>
            <person name="Dalin E."/>
            <person name="Tice H."/>
            <person name="Pitluck S."/>
            <person name="Sims D."/>
            <person name="Brettin T."/>
            <person name="Bruce D."/>
            <person name="Detter J.C."/>
            <person name="Han C."/>
            <person name="Tapia R."/>
            <person name="Schmutz J."/>
            <person name="Larimer F."/>
            <person name="Land M."/>
            <person name="Hauser L."/>
            <person name="Kyrpides N."/>
            <person name="Mikhailova N."/>
            <person name="Nelson K."/>
            <person name="Gogarten J.P."/>
            <person name="Noll K."/>
            <person name="Richardson P."/>
        </authorList>
    </citation>
    <scope>NUCLEOTIDE SEQUENCE [LARGE SCALE GENOMIC DNA]</scope>
    <source>
        <strain>ATCC BAA-488 / DSM 13995 / JCM 10881 / RKU-1</strain>
    </source>
</reference>
<name>SYE1_THEP1</name>